<reference key="1">
    <citation type="journal article" date="2001" name="Lancet">
        <title>Whole genome sequencing of meticillin-resistant Staphylococcus aureus.</title>
        <authorList>
            <person name="Kuroda M."/>
            <person name="Ohta T."/>
            <person name="Uchiyama I."/>
            <person name="Baba T."/>
            <person name="Yuzawa H."/>
            <person name="Kobayashi I."/>
            <person name="Cui L."/>
            <person name="Oguchi A."/>
            <person name="Aoki K."/>
            <person name="Nagai Y."/>
            <person name="Lian J.-Q."/>
            <person name="Ito T."/>
            <person name="Kanamori M."/>
            <person name="Matsumaru H."/>
            <person name="Maruyama A."/>
            <person name="Murakami H."/>
            <person name="Hosoyama A."/>
            <person name="Mizutani-Ui Y."/>
            <person name="Takahashi N.K."/>
            <person name="Sawano T."/>
            <person name="Inoue R."/>
            <person name="Kaito C."/>
            <person name="Sekimizu K."/>
            <person name="Hirakawa H."/>
            <person name="Kuhara S."/>
            <person name="Goto S."/>
            <person name="Yabuzaki J."/>
            <person name="Kanehisa M."/>
            <person name="Yamashita A."/>
            <person name="Oshima K."/>
            <person name="Furuya K."/>
            <person name="Yoshino C."/>
            <person name="Shiba T."/>
            <person name="Hattori M."/>
            <person name="Ogasawara N."/>
            <person name="Hayashi H."/>
            <person name="Hiramatsu K."/>
        </authorList>
    </citation>
    <scope>NUCLEOTIDE SEQUENCE [LARGE SCALE GENOMIC DNA]</scope>
    <source>
        <strain>Mu50 / ATCC 700699</strain>
    </source>
</reference>
<name>RNPA_STAAM</name>
<feature type="chain" id="PRO_0000198526" description="Ribonuclease P protein component">
    <location>
        <begin position="1"/>
        <end position="115"/>
    </location>
</feature>
<dbReference type="EC" id="3.1.26.5" evidence="1"/>
<dbReference type="EMBL" id="BA000017">
    <property type="protein sequence ID" value="BAB58875.1"/>
    <property type="molecule type" value="Genomic_DNA"/>
</dbReference>
<dbReference type="SMR" id="P66688"/>
<dbReference type="KEGG" id="sav:SAV2713"/>
<dbReference type="HOGENOM" id="CLU_117179_9_1_9"/>
<dbReference type="PhylomeDB" id="P66688"/>
<dbReference type="Proteomes" id="UP000002481">
    <property type="component" value="Chromosome"/>
</dbReference>
<dbReference type="GO" id="GO:0030677">
    <property type="term" value="C:ribonuclease P complex"/>
    <property type="evidence" value="ECO:0007669"/>
    <property type="project" value="TreeGrafter"/>
</dbReference>
<dbReference type="GO" id="GO:0042781">
    <property type="term" value="F:3'-tRNA processing endoribonuclease activity"/>
    <property type="evidence" value="ECO:0007669"/>
    <property type="project" value="TreeGrafter"/>
</dbReference>
<dbReference type="GO" id="GO:0004526">
    <property type="term" value="F:ribonuclease P activity"/>
    <property type="evidence" value="ECO:0007669"/>
    <property type="project" value="UniProtKB-UniRule"/>
</dbReference>
<dbReference type="GO" id="GO:0000049">
    <property type="term" value="F:tRNA binding"/>
    <property type="evidence" value="ECO:0007669"/>
    <property type="project" value="UniProtKB-UniRule"/>
</dbReference>
<dbReference type="GO" id="GO:0001682">
    <property type="term" value="P:tRNA 5'-leader removal"/>
    <property type="evidence" value="ECO:0007669"/>
    <property type="project" value="UniProtKB-UniRule"/>
</dbReference>
<dbReference type="FunFam" id="3.30.230.10:FF:000021">
    <property type="entry name" value="Ribonuclease P protein component"/>
    <property type="match status" value="1"/>
</dbReference>
<dbReference type="Gene3D" id="3.30.230.10">
    <property type="match status" value="1"/>
</dbReference>
<dbReference type="HAMAP" id="MF_00227">
    <property type="entry name" value="RNase_P"/>
    <property type="match status" value="1"/>
</dbReference>
<dbReference type="InterPro" id="IPR020568">
    <property type="entry name" value="Ribosomal_Su5_D2-typ_SF"/>
</dbReference>
<dbReference type="InterPro" id="IPR014721">
    <property type="entry name" value="Ribsml_uS5_D2-typ_fold_subgr"/>
</dbReference>
<dbReference type="InterPro" id="IPR000100">
    <property type="entry name" value="RNase_P"/>
</dbReference>
<dbReference type="InterPro" id="IPR020539">
    <property type="entry name" value="RNase_P_CS"/>
</dbReference>
<dbReference type="NCBIfam" id="TIGR00188">
    <property type="entry name" value="rnpA"/>
    <property type="match status" value="1"/>
</dbReference>
<dbReference type="PANTHER" id="PTHR33992">
    <property type="entry name" value="RIBONUCLEASE P PROTEIN COMPONENT"/>
    <property type="match status" value="1"/>
</dbReference>
<dbReference type="PANTHER" id="PTHR33992:SF1">
    <property type="entry name" value="RIBONUCLEASE P PROTEIN COMPONENT"/>
    <property type="match status" value="1"/>
</dbReference>
<dbReference type="Pfam" id="PF00825">
    <property type="entry name" value="Ribonuclease_P"/>
    <property type="match status" value="1"/>
</dbReference>
<dbReference type="SUPFAM" id="SSF54211">
    <property type="entry name" value="Ribosomal protein S5 domain 2-like"/>
    <property type="match status" value="1"/>
</dbReference>
<dbReference type="PROSITE" id="PS00648">
    <property type="entry name" value="RIBONUCLEASE_P"/>
    <property type="match status" value="1"/>
</dbReference>
<protein>
    <recommendedName>
        <fullName evidence="1">Ribonuclease P protein component</fullName>
        <shortName evidence="1">RNase P protein</shortName>
        <shortName evidence="1">RNaseP protein</shortName>
        <ecNumber evidence="1">3.1.26.5</ecNumber>
    </recommendedName>
    <alternativeName>
        <fullName evidence="1">Protein C5</fullName>
    </alternativeName>
</protein>
<accession>P66688</accession>
<accession>Q99QT2</accession>
<sequence length="115" mass="13426">MEKAYRIKKNADFQRIYKKGHSVANRQFVVYTCNNKEIDHFRLGISVSKKLGNAVLRNKIKRAIRENFKVHKSHILAKDIIVIARQPAKDMTTLQIQNSLEHVLKIAKVFNKKIK</sequence>
<keyword id="KW-0255">Endonuclease</keyword>
<keyword id="KW-0378">Hydrolase</keyword>
<keyword id="KW-0540">Nuclease</keyword>
<keyword id="KW-0694">RNA-binding</keyword>
<keyword id="KW-0819">tRNA processing</keyword>
<gene>
    <name evidence="1" type="primary">rnpA</name>
    <name type="ordered locus">SAV2713</name>
</gene>
<proteinExistence type="inferred from homology"/>
<organism>
    <name type="scientific">Staphylococcus aureus (strain Mu50 / ATCC 700699)</name>
    <dbReference type="NCBI Taxonomy" id="158878"/>
    <lineage>
        <taxon>Bacteria</taxon>
        <taxon>Bacillati</taxon>
        <taxon>Bacillota</taxon>
        <taxon>Bacilli</taxon>
        <taxon>Bacillales</taxon>
        <taxon>Staphylococcaceae</taxon>
        <taxon>Staphylococcus</taxon>
    </lineage>
</organism>
<evidence type="ECO:0000255" key="1">
    <source>
        <dbReference type="HAMAP-Rule" id="MF_00227"/>
    </source>
</evidence>
<comment type="function">
    <text evidence="1">RNaseP catalyzes the removal of the 5'-leader sequence from pre-tRNA to produce the mature 5'-terminus. It can also cleave other RNA substrates such as 4.5S RNA. The protein component plays an auxiliary but essential role in vivo by binding to the 5'-leader sequence and broadening the substrate specificity of the ribozyme.</text>
</comment>
<comment type="catalytic activity">
    <reaction evidence="1">
        <text>Endonucleolytic cleavage of RNA, removing 5'-extranucleotides from tRNA precursor.</text>
        <dbReference type="EC" id="3.1.26.5"/>
    </reaction>
</comment>
<comment type="subunit">
    <text evidence="1">Consists of a catalytic RNA component (M1 or rnpB) and a protein subunit.</text>
</comment>
<comment type="similarity">
    <text evidence="1">Belongs to the RnpA family.</text>
</comment>